<evidence type="ECO:0000250" key="1"/>
<evidence type="ECO:0000255" key="2">
    <source>
        <dbReference type="PROSITE-ProRule" id="PRU00258"/>
    </source>
</evidence>
<evidence type="ECO:0000255" key="3">
    <source>
        <dbReference type="PROSITE-ProRule" id="PRU01348"/>
    </source>
</evidence>
<evidence type="ECO:0000255" key="4">
    <source>
        <dbReference type="PROSITE-ProRule" id="PRU01363"/>
    </source>
</evidence>
<evidence type="ECO:0000255" key="5">
    <source>
        <dbReference type="PROSITE-ProRule" id="PRU10022"/>
    </source>
</evidence>
<evidence type="ECO:0000256" key="6">
    <source>
        <dbReference type="SAM" id="MobiDB-lite"/>
    </source>
</evidence>
<evidence type="ECO:0000269" key="7">
    <source>
    </source>
</evidence>
<evidence type="ECO:0000269" key="8">
    <source>
    </source>
</evidence>
<evidence type="ECO:0000269" key="9">
    <source>
    </source>
</evidence>
<evidence type="ECO:0000305" key="10"/>
<evidence type="ECO:0000305" key="11">
    <source>
    </source>
</evidence>
<evidence type="ECO:0007744" key="12">
    <source>
    </source>
</evidence>
<dbReference type="EC" id="2.3.1.292" evidence="7 11"/>
<dbReference type="EMBL" id="AL123456">
    <property type="protein sequence ID" value="CCP45734.1"/>
    <property type="molecule type" value="Genomic_DNA"/>
</dbReference>
<dbReference type="PIR" id="C70749">
    <property type="entry name" value="C70749"/>
</dbReference>
<dbReference type="RefSeq" id="NP_217447.1">
    <property type="nucleotide sequence ID" value="NC_000962.3"/>
</dbReference>
<dbReference type="RefSeq" id="WP_010886158.1">
    <property type="nucleotide sequence ID" value="NC_018143.2"/>
</dbReference>
<dbReference type="SMR" id="P9WQE7"/>
<dbReference type="FunCoup" id="P9WQE7">
    <property type="interactions" value="11"/>
</dbReference>
<dbReference type="STRING" id="83332.Rv2931"/>
<dbReference type="iPTMnet" id="P9WQE7"/>
<dbReference type="PaxDb" id="83332-Rv2931"/>
<dbReference type="GeneID" id="888183"/>
<dbReference type="KEGG" id="mtu:Rv2931"/>
<dbReference type="KEGG" id="mtv:RVBD_2931"/>
<dbReference type="PATRIC" id="fig|83332.111.peg.3261"/>
<dbReference type="TubercuList" id="Rv2931"/>
<dbReference type="eggNOG" id="COG1020">
    <property type="taxonomic scope" value="Bacteria"/>
</dbReference>
<dbReference type="eggNOG" id="COG3321">
    <property type="taxonomic scope" value="Bacteria"/>
</dbReference>
<dbReference type="InParanoid" id="P9WQE7"/>
<dbReference type="OrthoDB" id="9778690at2"/>
<dbReference type="PhylomeDB" id="P9WQE7"/>
<dbReference type="UniPathway" id="UPA00094"/>
<dbReference type="PHI-base" id="PHI:7220"/>
<dbReference type="Proteomes" id="UP000001584">
    <property type="component" value="Chromosome"/>
</dbReference>
<dbReference type="GO" id="GO:0005737">
    <property type="term" value="C:cytoplasm"/>
    <property type="evidence" value="ECO:0000318"/>
    <property type="project" value="GO_Central"/>
</dbReference>
<dbReference type="GO" id="GO:0009274">
    <property type="term" value="C:peptidoglycan-based cell wall"/>
    <property type="evidence" value="ECO:0007005"/>
    <property type="project" value="MTBBASE"/>
</dbReference>
<dbReference type="GO" id="GO:0034081">
    <property type="term" value="C:polyketide synthase complex"/>
    <property type="evidence" value="ECO:0000250"/>
    <property type="project" value="UniProtKB"/>
</dbReference>
<dbReference type="GO" id="GO:0004316">
    <property type="term" value="F:3-oxoacyl-[acyl-carrier-protein] reductase (NADPH) activity"/>
    <property type="evidence" value="ECO:0000314"/>
    <property type="project" value="MTBBASE"/>
</dbReference>
<dbReference type="GO" id="GO:0004315">
    <property type="term" value="F:3-oxoacyl-[acyl-carrier-protein] synthase activity"/>
    <property type="evidence" value="ECO:0000314"/>
    <property type="project" value="MTBBASE"/>
</dbReference>
<dbReference type="GO" id="GO:0000036">
    <property type="term" value="F:acyl carrier activity"/>
    <property type="evidence" value="ECO:0000314"/>
    <property type="project" value="MTBBASE"/>
</dbReference>
<dbReference type="GO" id="GO:0004312">
    <property type="term" value="F:fatty acid synthase activity"/>
    <property type="evidence" value="ECO:0000318"/>
    <property type="project" value="GO_Central"/>
</dbReference>
<dbReference type="GO" id="GO:0031177">
    <property type="term" value="F:phosphopantetheine binding"/>
    <property type="evidence" value="ECO:0000314"/>
    <property type="project" value="MTBBASE"/>
</dbReference>
<dbReference type="GO" id="GO:0071770">
    <property type="term" value="P:DIM/DIP cell wall layer assembly"/>
    <property type="evidence" value="ECO:0000314"/>
    <property type="project" value="MTBBASE"/>
</dbReference>
<dbReference type="GO" id="GO:0006633">
    <property type="term" value="P:fatty acid biosynthetic process"/>
    <property type="evidence" value="ECO:0000314"/>
    <property type="project" value="MTBBASE"/>
</dbReference>
<dbReference type="GO" id="GO:0097041">
    <property type="term" value="P:phenolic phthiocerol biosynthetic process"/>
    <property type="evidence" value="ECO:0000250"/>
    <property type="project" value="UniProtKB"/>
</dbReference>
<dbReference type="GO" id="GO:0097040">
    <property type="term" value="P:phthiocerol biosynthetic process"/>
    <property type="evidence" value="ECO:0000250"/>
    <property type="project" value="UniProtKB"/>
</dbReference>
<dbReference type="CDD" id="cd05274">
    <property type="entry name" value="KR_FAS_SDR_x"/>
    <property type="match status" value="1"/>
</dbReference>
<dbReference type="CDD" id="cd00833">
    <property type="entry name" value="PKS"/>
    <property type="match status" value="1"/>
</dbReference>
<dbReference type="FunFam" id="1.10.1200.10:FF:000025">
    <property type="entry name" value="Phenolpthiocerol synthesis polyketide synthase PpsA"/>
    <property type="match status" value="1"/>
</dbReference>
<dbReference type="FunFam" id="1.10.1200.10:FF:000019">
    <property type="entry name" value="Phenolpthiocerol synthesis type-I polyketide synthase PPSA"/>
    <property type="match status" value="1"/>
</dbReference>
<dbReference type="FunFam" id="3.30.70.250:FF:000003">
    <property type="entry name" value="Polyketide beta-ketoacyl synthase Pks3"/>
    <property type="match status" value="1"/>
</dbReference>
<dbReference type="FunFam" id="3.40.47.10:FF:000019">
    <property type="entry name" value="Polyketide synthase type I"/>
    <property type="match status" value="1"/>
</dbReference>
<dbReference type="Gene3D" id="3.40.47.10">
    <property type="match status" value="1"/>
</dbReference>
<dbReference type="Gene3D" id="1.10.1200.10">
    <property type="entry name" value="ACP-like"/>
    <property type="match status" value="2"/>
</dbReference>
<dbReference type="Gene3D" id="3.30.70.250">
    <property type="entry name" value="Malonyl-CoA ACP transacylase, ACP-binding"/>
    <property type="match status" value="1"/>
</dbReference>
<dbReference type="Gene3D" id="3.40.366.10">
    <property type="entry name" value="Malonyl-Coenzyme A Acyl Carrier Protein, domain 2"/>
    <property type="match status" value="1"/>
</dbReference>
<dbReference type="Gene3D" id="3.40.50.720">
    <property type="entry name" value="NAD(P)-binding Rossmann-like Domain"/>
    <property type="match status" value="1"/>
</dbReference>
<dbReference type="Gene3D" id="3.10.129.110">
    <property type="entry name" value="Polyketide synthase dehydratase"/>
    <property type="match status" value="1"/>
</dbReference>
<dbReference type="InterPro" id="IPR001227">
    <property type="entry name" value="Ac_transferase_dom_sf"/>
</dbReference>
<dbReference type="InterPro" id="IPR036736">
    <property type="entry name" value="ACP-like_sf"/>
</dbReference>
<dbReference type="InterPro" id="IPR014043">
    <property type="entry name" value="Acyl_transferase_dom"/>
</dbReference>
<dbReference type="InterPro" id="IPR016035">
    <property type="entry name" value="Acyl_Trfase/lysoPLipase"/>
</dbReference>
<dbReference type="InterPro" id="IPR018201">
    <property type="entry name" value="Ketoacyl_synth_AS"/>
</dbReference>
<dbReference type="InterPro" id="IPR014031">
    <property type="entry name" value="Ketoacyl_synth_C"/>
</dbReference>
<dbReference type="InterPro" id="IPR014030">
    <property type="entry name" value="Ketoacyl_synth_N"/>
</dbReference>
<dbReference type="InterPro" id="IPR016036">
    <property type="entry name" value="Malonyl_transacylase_ACP-bd"/>
</dbReference>
<dbReference type="InterPro" id="IPR036291">
    <property type="entry name" value="NAD(P)-bd_dom_sf"/>
</dbReference>
<dbReference type="InterPro" id="IPR032821">
    <property type="entry name" value="PKS_assoc"/>
</dbReference>
<dbReference type="InterPro" id="IPR020841">
    <property type="entry name" value="PKS_Beta-ketoAc_synthase_dom"/>
</dbReference>
<dbReference type="InterPro" id="IPR042104">
    <property type="entry name" value="PKS_dehydratase_sf"/>
</dbReference>
<dbReference type="InterPro" id="IPR020807">
    <property type="entry name" value="PKS_DH"/>
</dbReference>
<dbReference type="InterPro" id="IPR049552">
    <property type="entry name" value="PKS_DH_N"/>
</dbReference>
<dbReference type="InterPro" id="IPR013968">
    <property type="entry name" value="PKS_KR"/>
</dbReference>
<dbReference type="InterPro" id="IPR049900">
    <property type="entry name" value="PKS_mFAS_DH"/>
</dbReference>
<dbReference type="InterPro" id="IPR050091">
    <property type="entry name" value="PKS_NRPS_Biosynth_Enz"/>
</dbReference>
<dbReference type="InterPro" id="IPR020806">
    <property type="entry name" value="PKS_PP-bd"/>
</dbReference>
<dbReference type="InterPro" id="IPR009081">
    <property type="entry name" value="PP-bd_ACP"/>
</dbReference>
<dbReference type="InterPro" id="IPR006162">
    <property type="entry name" value="Ppantetheine_attach_site"/>
</dbReference>
<dbReference type="InterPro" id="IPR016039">
    <property type="entry name" value="Thiolase-like"/>
</dbReference>
<dbReference type="PANTHER" id="PTHR43775">
    <property type="entry name" value="FATTY ACID SYNTHASE"/>
    <property type="match status" value="1"/>
</dbReference>
<dbReference type="PANTHER" id="PTHR43775:SF37">
    <property type="entry name" value="SI:DKEY-61P9.11"/>
    <property type="match status" value="1"/>
</dbReference>
<dbReference type="Pfam" id="PF00698">
    <property type="entry name" value="Acyl_transf_1"/>
    <property type="match status" value="1"/>
</dbReference>
<dbReference type="Pfam" id="PF16197">
    <property type="entry name" value="KAsynt_C_assoc"/>
    <property type="match status" value="1"/>
</dbReference>
<dbReference type="Pfam" id="PF00109">
    <property type="entry name" value="ketoacyl-synt"/>
    <property type="match status" value="1"/>
</dbReference>
<dbReference type="Pfam" id="PF02801">
    <property type="entry name" value="Ketoacyl-synt_C"/>
    <property type="match status" value="1"/>
</dbReference>
<dbReference type="Pfam" id="PF08659">
    <property type="entry name" value="KR"/>
    <property type="match status" value="1"/>
</dbReference>
<dbReference type="Pfam" id="PF21089">
    <property type="entry name" value="PKS_DH_N"/>
    <property type="match status" value="1"/>
</dbReference>
<dbReference type="Pfam" id="PF00550">
    <property type="entry name" value="PP-binding"/>
    <property type="match status" value="2"/>
</dbReference>
<dbReference type="SMART" id="SM00827">
    <property type="entry name" value="PKS_AT"/>
    <property type="match status" value="1"/>
</dbReference>
<dbReference type="SMART" id="SM00826">
    <property type="entry name" value="PKS_DH"/>
    <property type="match status" value="1"/>
</dbReference>
<dbReference type="SMART" id="SM00822">
    <property type="entry name" value="PKS_KR"/>
    <property type="match status" value="1"/>
</dbReference>
<dbReference type="SMART" id="SM00825">
    <property type="entry name" value="PKS_KS"/>
    <property type="match status" value="1"/>
</dbReference>
<dbReference type="SMART" id="SM00823">
    <property type="entry name" value="PKS_PP"/>
    <property type="match status" value="2"/>
</dbReference>
<dbReference type="SMART" id="SM01294">
    <property type="entry name" value="PKS_PP_betabranch"/>
    <property type="match status" value="1"/>
</dbReference>
<dbReference type="SUPFAM" id="SSF47336">
    <property type="entry name" value="ACP-like"/>
    <property type="match status" value="2"/>
</dbReference>
<dbReference type="SUPFAM" id="SSF52151">
    <property type="entry name" value="FabD/lysophospholipase-like"/>
    <property type="match status" value="1"/>
</dbReference>
<dbReference type="SUPFAM" id="SSF51735">
    <property type="entry name" value="NAD(P)-binding Rossmann-fold domains"/>
    <property type="match status" value="2"/>
</dbReference>
<dbReference type="SUPFAM" id="SSF55048">
    <property type="entry name" value="Probable ACP-binding domain of malonyl-CoA ACP transacylase"/>
    <property type="match status" value="1"/>
</dbReference>
<dbReference type="SUPFAM" id="SSF53901">
    <property type="entry name" value="Thiolase-like"/>
    <property type="match status" value="1"/>
</dbReference>
<dbReference type="PROSITE" id="PS50075">
    <property type="entry name" value="CARRIER"/>
    <property type="match status" value="2"/>
</dbReference>
<dbReference type="PROSITE" id="PS00606">
    <property type="entry name" value="KS3_1"/>
    <property type="match status" value="1"/>
</dbReference>
<dbReference type="PROSITE" id="PS52004">
    <property type="entry name" value="KS3_2"/>
    <property type="match status" value="1"/>
</dbReference>
<dbReference type="PROSITE" id="PS00012">
    <property type="entry name" value="PHOSPHOPANTETHEINE"/>
    <property type="match status" value="1"/>
</dbReference>
<dbReference type="PROSITE" id="PS52019">
    <property type="entry name" value="PKS_MFAS_DH"/>
    <property type="match status" value="1"/>
</dbReference>
<protein>
    <recommendedName>
        <fullName evidence="10">Phenolphthiocerol/phthiocerol polyketide synthase subunit A</fullName>
        <ecNumber evidence="7 11">2.3.1.292</ecNumber>
    </recommendedName>
    <alternativeName>
        <fullName>(Phenol)carboxyphthiodiolenone synthase subunit A</fullName>
    </alternativeName>
    <alternativeName>
        <fullName>Beta-ketoacyl-acyl-carrier-protein synthase I</fullName>
    </alternativeName>
    <alternativeName>
        <fullName>Phthiocerol synthesis polyketide synthase type I PpsA</fullName>
    </alternativeName>
</protein>
<reference key="1">
    <citation type="journal article" date="1998" name="Nature">
        <title>Deciphering the biology of Mycobacterium tuberculosis from the complete genome sequence.</title>
        <authorList>
            <person name="Cole S.T."/>
            <person name="Brosch R."/>
            <person name="Parkhill J."/>
            <person name="Garnier T."/>
            <person name="Churcher C.M."/>
            <person name="Harris D.E."/>
            <person name="Gordon S.V."/>
            <person name="Eiglmeier K."/>
            <person name="Gas S."/>
            <person name="Barry C.E. III"/>
            <person name="Tekaia F."/>
            <person name="Badcock K."/>
            <person name="Basham D."/>
            <person name="Brown D."/>
            <person name="Chillingworth T."/>
            <person name="Connor R."/>
            <person name="Davies R.M."/>
            <person name="Devlin K."/>
            <person name="Feltwell T."/>
            <person name="Gentles S."/>
            <person name="Hamlin N."/>
            <person name="Holroyd S."/>
            <person name="Hornsby T."/>
            <person name="Jagels K."/>
            <person name="Krogh A."/>
            <person name="McLean J."/>
            <person name="Moule S."/>
            <person name="Murphy L.D."/>
            <person name="Oliver S."/>
            <person name="Osborne J."/>
            <person name="Quail M.A."/>
            <person name="Rajandream M.A."/>
            <person name="Rogers J."/>
            <person name="Rutter S."/>
            <person name="Seeger K."/>
            <person name="Skelton S."/>
            <person name="Squares S."/>
            <person name="Squares R."/>
            <person name="Sulston J.E."/>
            <person name="Taylor K."/>
            <person name="Whitehead S."/>
            <person name="Barrell B.G."/>
        </authorList>
    </citation>
    <scope>NUCLEOTIDE SEQUENCE [LARGE SCALE GENOMIC DNA]</scope>
    <source>
        <strain>ATCC 25618 / H37Rv</strain>
    </source>
</reference>
<reference key="2">
    <citation type="journal article" date="2005" name="Mol. Cell">
        <title>Dissecting the mechanism and assembly of a complex virulence mycobacterial lipid.</title>
        <authorList>
            <person name="Trivedi O.A."/>
            <person name="Arora P."/>
            <person name="Vats A."/>
            <person name="Ansari M.Z."/>
            <person name="Tickoo R."/>
            <person name="Sridharan V."/>
            <person name="Mohanty D."/>
            <person name="Gokhale R.S."/>
        </authorList>
    </citation>
    <scope>FUNCTION</scope>
    <scope>CATALYTIC ACTIVITY</scope>
    <scope>COFACTOR</scope>
    <scope>PATHWAY</scope>
</reference>
<reference key="3">
    <citation type="journal article" date="2008" name="BMC Syst. Biol.">
        <title>targetTB: a target identification pipeline for Mycobacterium tuberculosis through an interactome, reactome and genome-scale structural analysis.</title>
        <authorList>
            <person name="Raman K."/>
            <person name="Yeturu K."/>
            <person name="Chandra N."/>
        </authorList>
    </citation>
    <scope>IDENTIFICATION AS A DRUG TARGET [LARGE SCALE ANALYSIS]</scope>
</reference>
<reference key="4">
    <citation type="journal article" date="2010" name="FEBS J.">
        <title>Delineation of the roles of FadD22, FadD26 and FadD29 in the biosynthesis of phthiocerol dimycocerosates and related compounds in Mycobacterium tuberculosis.</title>
        <authorList>
            <person name="Simeone R."/>
            <person name="Leger M."/>
            <person name="Constant P."/>
            <person name="Malaga W."/>
            <person name="Marrakchi H."/>
            <person name="Daffe M."/>
            <person name="Guilhot C."/>
            <person name="Chalut C."/>
        </authorList>
    </citation>
    <scope>FUNCTION</scope>
    <scope>CATALYTIC ACTIVITY</scope>
</reference>
<reference key="5">
    <citation type="journal article" date="2011" name="Mol. Cell. Proteomics">
        <title>Proteogenomic analysis of Mycobacterium tuberculosis by high resolution mass spectrometry.</title>
        <authorList>
            <person name="Kelkar D.S."/>
            <person name="Kumar D."/>
            <person name="Kumar P."/>
            <person name="Balakrishnan L."/>
            <person name="Muthusamy B."/>
            <person name="Yadav A.K."/>
            <person name="Shrivastava P."/>
            <person name="Marimuthu A."/>
            <person name="Anand S."/>
            <person name="Sundaram H."/>
            <person name="Kingsbury R."/>
            <person name="Harsha H.C."/>
            <person name="Nair B."/>
            <person name="Prasad T.S."/>
            <person name="Chauhan D.S."/>
            <person name="Katoch K."/>
            <person name="Katoch V.M."/>
            <person name="Kumar P."/>
            <person name="Chaerkady R."/>
            <person name="Ramachandran S."/>
            <person name="Dash D."/>
            <person name="Pandey A."/>
        </authorList>
    </citation>
    <scope>ACETYLATION [LARGE SCALE ANALYSIS] AT THR-2</scope>
    <scope>CLEAVAGE OF INITIATOR METHIONINE [LARGE SCALE ANALYSIS]</scope>
    <scope>IDENTIFICATION BY MASS SPECTROMETRY [LARGE SCALE ANALYSIS]</scope>
    <source>
        <strain>ATCC 25618 / H37Rv</strain>
    </source>
</reference>
<organism>
    <name type="scientific">Mycobacterium tuberculosis (strain ATCC 25618 / H37Rv)</name>
    <dbReference type="NCBI Taxonomy" id="83332"/>
    <lineage>
        <taxon>Bacteria</taxon>
        <taxon>Bacillati</taxon>
        <taxon>Actinomycetota</taxon>
        <taxon>Actinomycetes</taxon>
        <taxon>Mycobacteriales</taxon>
        <taxon>Mycobacteriaceae</taxon>
        <taxon>Mycobacterium</taxon>
        <taxon>Mycobacterium tuberculosis complex</taxon>
    </lineage>
</organism>
<comment type="function">
    <text evidence="7 9">Part of the PpsABCDE complex involved in the biosynthesis of the lipid core common to phthiocerols and phenolphthiocerols by successive additions of malonyl-CoA or methylmalonyl-CoA extender units (PubMed:15749014, PubMed:20553505). PpsA can accept as substrate the activated forms of either icosanoyl (C20), docosanoyl (C22) or lignoceroyl (C24) groups from FadD26, or a (4-hydroxyphenyl)-C17 or (4-hydroxyphenyl)-C19 fatty acyl from FadD29 (PubMed:15749014, PubMed:20553505). PpsA initiates the biosynthesis and extends its substrate using a malonyl-CoA extender unit. The PpsB and PpsC proteins add the second and third malonyl-CoA extender units. PpsD adds an (R)-methylmalonyl unit and PpsE adds a second (R)-methylmalonyl unit. The incorporation of the methylmalonyl units results in formation of two branched methyl groups in the elongated product (PubMed:15749014).</text>
</comment>
<comment type="catalytic activity">
    <reaction evidence="7 11">
        <text>icosanoyl-[(phenol)carboxyphthiodiolenone synthase] + 2 (S)-methylmalonyl-CoA + 3 malonyl-CoA + 5 NADPH + 10 H(+) = C32-carboxyphthiodiolenone-[(phenol)carboxyphthiodiolenone synthase] + 5 CO2 + 5 NADP(+) + 5 CoA + 2 H2O</text>
        <dbReference type="Rhea" id="RHEA:57748"/>
        <dbReference type="Rhea" id="RHEA-COMP:14985"/>
        <dbReference type="Rhea" id="RHEA-COMP:14986"/>
        <dbReference type="ChEBI" id="CHEBI:15377"/>
        <dbReference type="ChEBI" id="CHEBI:15378"/>
        <dbReference type="ChEBI" id="CHEBI:16526"/>
        <dbReference type="ChEBI" id="CHEBI:57287"/>
        <dbReference type="ChEBI" id="CHEBI:57327"/>
        <dbReference type="ChEBI" id="CHEBI:57384"/>
        <dbReference type="ChEBI" id="CHEBI:57783"/>
        <dbReference type="ChEBI" id="CHEBI:58349"/>
        <dbReference type="ChEBI" id="CHEBI:87848"/>
        <dbReference type="ChEBI" id="CHEBI:142236"/>
        <dbReference type="EC" id="2.3.1.292"/>
    </reaction>
</comment>
<comment type="catalytic activity">
    <reaction evidence="7 11">
        <text>docosanoyl-[(phenol)carboxyphthiodiolenone synthase] + 2 (S)-methylmalonyl-CoA + 3 malonyl-CoA + 5 NADPH + 10 H(+) = C34-carboxyphthiodiolenone-[(phenol)carboxyphthiodiolenone synthase] + 5 CO2 + 5 NADP(+) + 5 CoA + 2 H2O</text>
        <dbReference type="Rhea" id="RHEA:57752"/>
        <dbReference type="Rhea" id="RHEA-COMP:14987"/>
        <dbReference type="Rhea" id="RHEA-COMP:14988"/>
        <dbReference type="ChEBI" id="CHEBI:15377"/>
        <dbReference type="ChEBI" id="CHEBI:15378"/>
        <dbReference type="ChEBI" id="CHEBI:16526"/>
        <dbReference type="ChEBI" id="CHEBI:57287"/>
        <dbReference type="ChEBI" id="CHEBI:57327"/>
        <dbReference type="ChEBI" id="CHEBI:57384"/>
        <dbReference type="ChEBI" id="CHEBI:57783"/>
        <dbReference type="ChEBI" id="CHEBI:58349"/>
        <dbReference type="ChEBI" id="CHEBI:142237"/>
        <dbReference type="ChEBI" id="CHEBI:142238"/>
        <dbReference type="EC" id="2.3.1.292"/>
    </reaction>
</comment>
<comment type="catalytic activity">
    <reaction evidence="7 11">
        <text>17-(4-hydroxyphenyl)heptadecanoyl-[(phenol)carboxyphthiodiolenone synthase] + 2 (S)-methylmalonyl-CoA + 3 malonyl-CoA + 5 NADPH + 10 H(+) = C35-(phenol)carboxyphthiodiolenone-[(phenol)carboxyphthiodiolenone synthase] + 5 CO2 + 5 NADP(+) + 5 CoA + 2 H2O</text>
        <dbReference type="Rhea" id="RHEA:57756"/>
        <dbReference type="Rhea" id="RHEA-COMP:14272"/>
        <dbReference type="Rhea" id="RHEA-COMP:14989"/>
        <dbReference type="ChEBI" id="CHEBI:15377"/>
        <dbReference type="ChEBI" id="CHEBI:15378"/>
        <dbReference type="ChEBI" id="CHEBI:16526"/>
        <dbReference type="ChEBI" id="CHEBI:57287"/>
        <dbReference type="ChEBI" id="CHEBI:57327"/>
        <dbReference type="ChEBI" id="CHEBI:57384"/>
        <dbReference type="ChEBI" id="CHEBI:57783"/>
        <dbReference type="ChEBI" id="CHEBI:58349"/>
        <dbReference type="ChEBI" id="CHEBI:133300"/>
        <dbReference type="ChEBI" id="CHEBI:142259"/>
        <dbReference type="EC" id="2.3.1.292"/>
    </reaction>
</comment>
<comment type="catalytic activity">
    <reaction evidence="7 11">
        <text>19-(4-hydroxyphenyl)nonadecanoyl-[(phenol)carboxyphthiodiolenone synthase] + 2 (S)-methylmalonyl-CoA + 3 malonyl-CoA + 5 NADPH + 10 H(+) = C37-(phenol)carboxyphthiodiolenone-[(phenol)carboxyphthiodiolenone synthase] + 5 CO2 + 5 NADP(+) + 5 CoA + 2 H2O</text>
        <dbReference type="Rhea" id="RHEA:57760"/>
        <dbReference type="Rhea" id="RHEA-COMP:14273"/>
        <dbReference type="Rhea" id="RHEA-COMP:14990"/>
        <dbReference type="ChEBI" id="CHEBI:15377"/>
        <dbReference type="ChEBI" id="CHEBI:15378"/>
        <dbReference type="ChEBI" id="CHEBI:16526"/>
        <dbReference type="ChEBI" id="CHEBI:57287"/>
        <dbReference type="ChEBI" id="CHEBI:57327"/>
        <dbReference type="ChEBI" id="CHEBI:57384"/>
        <dbReference type="ChEBI" id="CHEBI:57783"/>
        <dbReference type="ChEBI" id="CHEBI:58349"/>
        <dbReference type="ChEBI" id="CHEBI:133301"/>
        <dbReference type="ChEBI" id="CHEBI:142260"/>
        <dbReference type="EC" id="2.3.1.292"/>
    </reaction>
</comment>
<comment type="cofactor">
    <cofactor evidence="7">
        <name>NADP(+)</name>
        <dbReference type="ChEBI" id="CHEBI:58349"/>
    </cofactor>
</comment>
<comment type="cofactor">
    <cofactor evidence="1">
        <name>pantetheine 4'-phosphate</name>
        <dbReference type="ChEBI" id="CHEBI:47942"/>
    </cofactor>
    <text evidence="1">Binds 2 phosphopantetheines covalently.</text>
</comment>
<comment type="pathway">
    <text evidence="7">Lipid metabolism; fatty acid biosynthesis.</text>
</comment>
<comment type="miscellaneous">
    <text evidence="8">Was identified as a high-confidence drug target.</text>
</comment>
<accession>P9WQE7</accession>
<accession>L0TCN4</accession>
<accession>Q10977</accession>
<name>PPSA_MYCTU</name>
<feature type="initiator methionine" description="Removed" evidence="12">
    <location>
        <position position="1"/>
    </location>
</feature>
<feature type="chain" id="PRO_0000180301" description="Phenolphthiocerol/phthiocerol polyketide synthase subunit A">
    <location>
        <begin position="2"/>
        <end position="1876"/>
    </location>
</feature>
<feature type="domain" description="Carrier 1" evidence="2">
    <location>
        <begin position="9"/>
        <end position="83"/>
    </location>
</feature>
<feature type="domain" description="Ketosynthase family 3 (KS3)" evidence="3">
    <location>
        <begin position="101"/>
        <end position="526"/>
    </location>
</feature>
<feature type="domain" description="PKS/mFAS DH" evidence="4">
    <location>
        <begin position="997"/>
        <end position="1267"/>
    </location>
</feature>
<feature type="domain" description="Carrier 2" evidence="2">
    <location>
        <begin position="1759"/>
        <end position="1836"/>
    </location>
</feature>
<feature type="region of interest" description="Acyltransferase" evidence="1">
    <location>
        <begin position="626"/>
        <end position="950"/>
    </location>
</feature>
<feature type="region of interest" description="N-terminal hotdog fold" evidence="4">
    <location>
        <begin position="997"/>
        <end position="1112"/>
    </location>
</feature>
<feature type="region of interest" description="Disordered" evidence="6">
    <location>
        <begin position="1102"/>
        <end position="1130"/>
    </location>
</feature>
<feature type="region of interest" description="C-terminal hotdog fold" evidence="4">
    <location>
        <begin position="1130"/>
        <end position="1267"/>
    </location>
</feature>
<feature type="region of interest" description="Beta-ketoacyl reductase" evidence="1">
    <location>
        <begin position="1491"/>
        <end position="1728"/>
    </location>
</feature>
<feature type="compositionally biased region" description="Low complexity" evidence="6">
    <location>
        <begin position="1106"/>
        <end position="1115"/>
    </location>
</feature>
<feature type="active site" description="For beta-ketoacyl synthase activity" evidence="3">
    <location>
        <position position="273"/>
    </location>
</feature>
<feature type="active site" description="For beta-ketoacyl synthase activity" evidence="3">
    <location>
        <position position="408"/>
    </location>
</feature>
<feature type="active site" description="For beta-ketoacyl synthase activity" evidence="3">
    <location>
        <position position="448"/>
    </location>
</feature>
<feature type="active site" description="For malonyltransferase activity" evidence="5">
    <location>
        <position position="720"/>
    </location>
</feature>
<feature type="active site" description="Proton acceptor; for dehydratase activity" evidence="4">
    <location>
        <position position="1027"/>
    </location>
</feature>
<feature type="active site" description="Proton donor; for dehydratase activity" evidence="4">
    <location>
        <position position="1186"/>
    </location>
</feature>
<feature type="binding site" evidence="1">
    <location>
        <begin position="1491"/>
        <end position="1551"/>
    </location>
    <ligand>
        <name>NADP(+)</name>
        <dbReference type="ChEBI" id="CHEBI:58349"/>
    </ligand>
</feature>
<feature type="modified residue" description="N-acetylthreonine" evidence="12">
    <location>
        <position position="2"/>
    </location>
</feature>
<feature type="modified residue" description="O-(pantetheine 4'-phosphoryl)serine" evidence="2">
    <location>
        <position position="43"/>
    </location>
</feature>
<feature type="modified residue" description="O-(pantetheine 4'-phosphoryl)serine" evidence="2">
    <location>
        <position position="1796"/>
    </location>
</feature>
<proteinExistence type="evidence at protein level"/>
<gene>
    <name type="primary">ppsA</name>
    <name type="ordered locus">Rv2931</name>
    <name type="ORF">MTCY338.20</name>
</gene>
<keyword id="KW-0007">Acetylation</keyword>
<keyword id="KW-0276">Fatty acid metabolism</keyword>
<keyword id="KW-0443">Lipid metabolism</keyword>
<keyword id="KW-0511">Multifunctional enzyme</keyword>
<keyword id="KW-0521">NADP</keyword>
<keyword id="KW-0560">Oxidoreductase</keyword>
<keyword id="KW-0596">Phosphopantetheine</keyword>
<keyword id="KW-0597">Phosphoprotein</keyword>
<keyword id="KW-1185">Reference proteome</keyword>
<keyword id="KW-0677">Repeat</keyword>
<keyword id="KW-0808">Transferase</keyword>
<sequence>MTGSISGEADLRHWLIDYLVTNIGCTPDEVDPDLSLADLGVSSRDAVVLSGELSELLGRTVSPIDFWEHPTINALAAYLAAPEPSPDSDAAVKRGARNSLDEPIAVVGMGCRFPGGISCPEALWDFLCERRSSISQVPPQRWQPFEGGPPEVAAALARTTRWGSFLPDIDAFDAEFFEISPSEADKMDPQQRLLLEVAWEALEHAGIPPGTLRRSATGVFAGACLSEYGAMASADLSQVDGWSNSGGAMSIIANRLSYFLDLRGPSVAVDTACSSSLVAIHLACQSLRTQDCHLAIAAGVNLLLSPAVFRGFDQVGALSPTGQCRAFDATADGFVRGEGAGVVVLKRLTDAQRDGDRVLAVICGSAVNQDGRSNGLMAPNPAAQMAVLRAAYTNAGMQPSEVDYVEAHGTGTLLGDPIEARALGTVLGRGRPEDSPLLIGSVKTNLGHTEAAAGIAGFIKTVLAVQHGQIPPNQHFETANPHIPFTDLRMKVVDTQTEWPATGHPRRAGVSSFGFGGTNAHVVIEQGQEVRPAPGQGLSPAVSTLVVAGKTMQRVSATAGMLADWMEGPGADVALADVAHTLNHHRSRQPKFGTVVARDRTQAIAGLRALAAGQHAPGVVNPADGSPGPGTVFVYSGRGSQWAGMGRQLLADEPAFAAAVAELEPVFVEQAGFSLHDVLANGEELVGIEQIQLGLIGMQLALTELWCSYGVRPDLVIGHSMGEVAAAVVAGALTPAEGLRVTATRSRLMAPLSGQGGMALLELDAPTTEALIADFPQVTLGIYNSPRQTVIAGPTEQIDELIARVRAQNRFASRVNIEVAPHNPAMDALQPAMRSELADLTPRTPTIGIISTTYADLHTQPVFDAEHWATNMRNPVRFQQAIASAGSGADGAYHTFIEISAHPLLTQAIIDTLHSAQPGARYTSLGTLQRDTDDVVTFRTNLNKAHTIHPPHTPHPPEPHPPIPTTPWQHTRHWITTKYPAGSVGSAPRAGTLLGQHTTVATVSASPPSHLWQARLAPDAKPYQGGHRFHQVEVVPASVVLHTILSAATELGYSALSEVRFEQPIFADRPRLIQVVADNRAISLASSPAAGTPSDRWTRHVTAQLSSSPSDSASSLNEHHRANGQPPERAHRDLIPDLAELLAMRGIDGLPFSWTVASWTQHSSNLTVAIDLPEALPEGSTGPLLDAAVHLAALSDVADSRLYVPASIEQISLGDVVTGPRSSVTLNRTAHDDDGITVDVTVAAHGEVPSLSMRSLRYRALDFGLDVGRAQPPASTGPVEAYCDATNFVHTIDWQPQTVPDATHPGAEQVTHPGPVAIIGDDGAALCETLEGAGYQPAVMSDGVSQARYVVYVADSDPAGADETDVDFAVRICTEITGLVRTLAERDADKPAALWILTRGVHESVAPSALRQSFLWGLAGVIAAEHPELWGGLVDLAINDDLGEFGPALAELLAKPSKSILVRRDGVVLAPALAPVRGEPARKSLQCRPDAAYLITGGLGALGLLMADWLADRGAHRLVLTGRTPLPPRRDWQLDTLDTELRRRIDAIRALEMRGVTVEAVAADVGCREDVQALLAARDRDGAAPIRGIIHAAGITNDQLVTSMTGDAVRQVMWPKIGGSQVLHDAFPPGSVDFFYLTASAAGIFGIPGQGSYAAANSYLDALARARRQQGCHTMSLDWVAWRGLGLAADAQLVSEELARMGSRDITPSEAFTAWEFVDGYDVAQAVVVPMPAPAGADGSGANAYLLPARNWSVMAATEVRSELEQGLRRIIAAELRVPEKELDTDRPFAELGLNSLMAMAIRREAEQFVGIELSATMLFNHPTVKSLASYLAKRVAPHDVSQDNQISALSSSAGSVLDSLFDRIESAPPEAERSV</sequence>